<evidence type="ECO:0000255" key="1"/>
<evidence type="ECO:0000256" key="2">
    <source>
        <dbReference type="SAM" id="MobiDB-lite"/>
    </source>
</evidence>
<evidence type="ECO:0000269" key="3">
    <source>
    </source>
</evidence>
<evidence type="ECO:0000269" key="4">
    <source>
    </source>
</evidence>
<evidence type="ECO:0000269" key="5">
    <source>
    </source>
</evidence>
<evidence type="ECO:0000269" key="6">
    <source>
    </source>
</evidence>
<evidence type="ECO:0000305" key="7"/>
<gene>
    <name type="primary">wapA</name>
    <name type="ordered locus">BSU39230</name>
    <name type="ORF">N17G</name>
</gene>
<keyword id="KW-0134">Cell wall</keyword>
<keyword id="KW-0903">Direct protein sequencing</keyword>
<keyword id="KW-0255">Endonuclease</keyword>
<keyword id="KW-0378">Hydrolase</keyword>
<keyword id="KW-0540">Nuclease</keyword>
<keyword id="KW-1185">Reference proteome</keyword>
<keyword id="KW-0677">Repeat</keyword>
<keyword id="KW-0964">Secreted</keyword>
<keyword id="KW-0732">Signal</keyword>
<keyword id="KW-0800">Toxin</keyword>
<keyword id="KW-0843">Virulence</keyword>
<comment type="function">
    <text evidence="5 6">Toxic component of a toxin-immunity protein module, which functions as a cellular contact-dependent growth inhibition (CDI) system. A site-specific general tRNA nuclease, the C-terminus (residues 2201-2334) removes 2 or 4 nucleotides from the 3' end of at least 4 tRNAs (upon expression in E.coli), possibly endonucleolytically. The nuclease activity is neutralized by expression of the cognate immunity protein WapI from the same strain, but not its homolog from 2 other B.subtilis strains. The C-terminus cannot be expressed on its own in E.coli, however it can be cloned in the presence of its cognate immunity protein gene. Cell contact is necessary for growth inhibition (PubMed:23572593). Unlike the LXG toxin-immunity modules, WapAI mediates competition under shaking culture conditions (PubMed:34280190).</text>
</comment>
<comment type="activity regulation">
    <text evidence="4">Detected in exponentially growing cells as many processing products, protein disappears upon entry into stationary phase with the concomitant appearance of smaller products. The large products persist in the absence of the extracellular serine protease Epr (PubMed:11987133).</text>
</comment>
<comment type="subcellular location">
    <subcellularLocation>
        <location evidence="4">Secreted</location>
        <location evidence="4">Cell wall</location>
    </subcellularLocation>
    <subcellularLocation>
        <location evidence="3">Secreted</location>
    </subcellularLocation>
    <text evidence="3">Probably exported by a SecA-dependent pathway.</text>
</comment>
<comment type="induction">
    <text evidence="6">Constitutively and highly expressed on solid and in liquid medium, with or without biofilm formation, by 12 hours of culture. Repressed by DegU.</text>
</comment>
<comment type="domain">
    <text>Has two ligand-binding domains; the N-terminus has three 101 AA repeats which are responsible for cell wall binding; the C-terminus consists of two blocks of residues with a conserved motif repeated 31 times.</text>
</comment>
<comment type="PTM">
    <text evidence="4">Identified in the extracellular proteome as many processing products ranging from over 85 kDa to about 30 kDa. One of these probably starts on Ser-1726. Two forms are known as CWBP62 and CWBP105 (PubMed:11987133).</text>
</comment>
<comment type="disruption phenotype">
    <text evidence="5 6">A double wapA-wapI deletion strain is growth inhibited when cocultured with wild-type cells. When wapI is reintroduced it restores growth in a cognate toxin-dependent fashion (PubMed:23572593). Growth inhibition by wild-type cells is strongest on LB medium and less effective on media that promote biofilm formation (MSgg and 2xSGG) (PubMed:34280190).</text>
</comment>
<comment type="similarity">
    <text evidence="7">Belongs to the RHS/WapA nuclease family.</text>
</comment>
<accession>Q07833</accession>
<name>WAPA_BACSU</name>
<sequence length="2334" mass="258162">MKKRKRRNFKRFIAAFLVLALMISLVPADVLAKSTEEENGNRIAADDPEETLQKEQTEEAVPFDPKDINKEGEITSERTENTKLYYEGDGVYKQEVYLDPIHTKETPDADWEDISPELKESTSKQVETENAILNSDFQKQMKNGLYATFEHNDHKVTYSLAEAKGPNKTSLTPKDTSADYKTDSNEIVYPDVFPNIDLQTFTFNENIKEDLVLHQYNGYNTFTFQLKTDLQAKEQEDGSIDFSDEKGKVVFSVPKPFMTDSKLDELSGEVERSDKVSYKLEKNEEGYLLHLTADENWLKDPERVYPVSIDPSTSLSVSSDTFVMSAYPTTNYSASSQKWDANLKAYVLKTGYYDKTTGTNYAFMKFNNLKPIQNMTVTKATLKTYVAHSYYGTKATGLWLDTVNSNYDNAKVTWNTKPASKNIGKADVHKGQWASYDVTAAVKSWNSGGANYGFKLHTNGNGKEYWKKLISSANSANKPYIEVTYTIPKGNTPTIKAYHNGDSTGYFDISWKKVEGAKGYKVWIYNGKEYQAISAGNVTSWSTKGKKIWPTSAEIASKRYKLHLDGKDGAELALDPSPVYKNSGGSYATSKNYWIGVSAIFDQGEGAMSAPAKPVIPNVGKAQAPSAKGYNNGNATGYFDLSWKAVSGATGYKVQVFNGKGFETLDLGNQTSWTTKGKKIWPTSAEIKAGKYALHLKDGSGAELPINPGPTYKNAGGDGAKRNYSFKIIAYNKDGEAIASPAATPALPDIARPKNVTGYLYTNTKSSQTGYVNLIWEKVQNAKGYKVNIYNGKEYQSFDVGDADHWTTQNKNIWPTSEEIKAGSYKLHTDGKGGELALDPSPVYNNANGNYKGKKNYSFTLVAYDANGETIPTAPFNPTFHEGAEFLGTEEYWSIIDIPSGQLNGATGNVIVNEEDLSIDGRGPGLGLSRTYNSLDSSDHLFGQGWYADAETSVISTDGGAMYIDEDATTHRFTKKADGTYQPPTGVYLELTETADQFILKTKDQTNAYFNKKGGKLQKVVDGHNNATVYTYNDKNQLTAITDASGRKLTFTYDENGHVTSITGPKNKKVTYSYENDLLKKVTDTDGTVTSYDYDSEGRLVKQYSANSTEAKPVFTEYQYSGHRLEKAINAKKETYVYSYDADKKTLLMTQPNGRKVQYGYNEAGNPIQVIDDAEGLKITTNTKYEGNNVVEDVDPNDVGTGKATESYQYDKDGNVTSVKDAYGTETYEYNKNNDVTKMKDTEGNVTDIAYDGLDAVSETDQSGKSSSAAVYDKYGNQIQSSKDLSASTNILKDGSFEAQKSGWNLTASKDSGKISVIADKSGVLSGSKALEVLSQSTSAGTDHGYSSATQTVELEPNTTYTLSGKIKTDLAKSRAYFNIDLRDKDQKRIQWIHNEYSALAGKNDWTKRQITFTTPANAGKAVVYMEVDHKDKDGKGKAWFDEVQLEKGEVSSSYNPVQNSSFTSATENWNVSGASVDSEEGFNDDVSLKAARTSASQAGSVTKQTVVLGQSANDKPVYLTLTGMSKASSVKFTDEKDYSLQANVTYADGSTGIYNAKFPSGTQEWNRAAVVIPKTKPINKVDISILFQKSATGTVWFDDIRLIEGSLLTKSTYDSNGNYVTKEEDELGYATSTDYDETGKKTSETDAKGEKTTYTYDQADQLTNMTLSNGTSILHSYDKEGNEVSKTIRAGADQTYKFEYDVMGKLVKTTDPLGNVLASEYDANSNLTKTISPNGNEVSLSYDGTDRVKSKSYNGTEKYIFTYDKNGNETSVVNKEQNTTKKRTFDNKNRLTELTDRGGSQTWTYPSDSDKLKTFSWIHGDQKGTNQFTYNKLDQMIEMKDSTSSYSFDYDENGNVQTFITGNGGGTSFSYDERNLVSSLHIGDKNGGDILTESYEYDANGNRTTINSSASGKVQYEYGKLNQLVKETHEDGTVIEYTYDGFGNRKTVTTIKDGSSKTVNASFNIMNQLTKVNDESISYDKNGNRTSDGKFTYTWDAEDNLTAVTKKGEDKPFATYKYDEKGNRIQKTVNGKVTNYFYDGDSLNVLYETDADNNVTKSYTYGDSGQLLSYTENGKKYFYHYNAHGDIIAISDSTGKTVAKYQYDAWGNPTKTEASDEVKDNRYRYAGYQYDEETGLYYLMARYYEPRNGVFLSLDPDPGSDGDSLDQNGYAYGNNNPVMNVDPDGHWVWLVVNAGFAAYDGYKAYKSGKGWKGAAWAAASNFGPGKIFKGASRAYKFTKKAVKITGHTRHGLNQSIGRNGGRGVNLRAKLNAVRSPKKVIKQPNGATKYVGKKATVVLNKRGKVITAYGSSRAKGSKHVFHTHGKGNKSKRRR</sequence>
<organism>
    <name type="scientific">Bacillus subtilis (strain 168)</name>
    <dbReference type="NCBI Taxonomy" id="224308"/>
    <lineage>
        <taxon>Bacteria</taxon>
        <taxon>Bacillati</taxon>
        <taxon>Bacillota</taxon>
        <taxon>Bacilli</taxon>
        <taxon>Bacillales</taxon>
        <taxon>Bacillaceae</taxon>
        <taxon>Bacillus</taxon>
    </lineage>
</organism>
<feature type="signal peptide" description="Or 32" evidence="1">
    <location>
        <begin position="1"/>
        <end position="28"/>
    </location>
</feature>
<feature type="chain" id="PRO_0000022689" description="tRNA nuclease WapA">
    <location>
        <begin position="29"/>
        <end position="2334"/>
    </location>
</feature>
<feature type="repeat" description="1-1">
    <location>
        <begin position="504"/>
        <end position="605"/>
    </location>
</feature>
<feature type="repeat" description="1-2">
    <location>
        <begin position="636"/>
        <end position="736"/>
    </location>
</feature>
<feature type="repeat" description="1-3">
    <location>
        <begin position="769"/>
        <end position="869"/>
    </location>
</feature>
<feature type="repeat" description="2-1">
    <location>
        <begin position="1021"/>
        <end position="1040"/>
    </location>
</feature>
<feature type="repeat" description="YD 1">
    <location>
        <begin position="1032"/>
        <end position="1065"/>
    </location>
</feature>
<feature type="repeat" description="2-2">
    <location>
        <begin position="1042"/>
        <end position="1061"/>
    </location>
</feature>
<feature type="repeat" description="2-3">
    <location>
        <begin position="1063"/>
        <end position="1082"/>
    </location>
</feature>
<feature type="repeat" description="YD 2">
    <location>
        <begin position="1075"/>
        <end position="1103"/>
    </location>
</feature>
<feature type="repeat" description="2-4">
    <location>
        <begin position="1083"/>
        <end position="1102"/>
    </location>
</feature>
<feature type="repeat" description="2-5">
    <location>
        <begin position="1109"/>
        <end position="1128"/>
    </location>
</feature>
<feature type="repeat" description="2-6">
    <location>
        <begin position="1129"/>
        <end position="1148"/>
    </location>
</feature>
<feature type="repeat" description="2-7">
    <location>
        <begin position="1150"/>
        <end position="1169"/>
    </location>
</feature>
<feature type="repeat" description="2-8">
    <location>
        <begin position="1174"/>
        <end position="1193"/>
    </location>
</feature>
<feature type="repeat" description="2-9">
    <location>
        <begin position="1199"/>
        <end position="1218"/>
    </location>
</feature>
<feature type="repeat" description="2-10">
    <location>
        <begin position="1219"/>
        <end position="1238"/>
    </location>
</feature>
<feature type="repeat" description="YD 3">
    <location>
        <begin position="1636"/>
        <end position="1671"/>
    </location>
</feature>
<feature type="repeat" description="2-11">
    <location>
        <begin position="1646"/>
        <end position="1665"/>
    </location>
</feature>
<feature type="repeat" description="2-12">
    <location>
        <begin position="1667"/>
        <end position="1686"/>
    </location>
</feature>
<feature type="repeat" description="2-13">
    <location>
        <begin position="1690"/>
        <end position="1709"/>
    </location>
</feature>
<feature type="repeat" description="2-14">
    <location>
        <begin position="1711"/>
        <end position="1730"/>
    </location>
</feature>
<feature type="repeat" description="2-15">
    <location>
        <begin position="1732"/>
        <end position="1751"/>
    </location>
</feature>
<feature type="repeat" description="2-16">
    <location>
        <begin position="1753"/>
        <end position="1772"/>
    </location>
</feature>
<feature type="repeat" description="2-17">
    <location>
        <begin position="1795"/>
        <end position="1814"/>
    </location>
</feature>
<feature type="repeat" description="2-18">
    <location>
        <begin position="1820"/>
        <end position="1839"/>
    </location>
</feature>
<feature type="repeat" description="2-19">
    <location>
        <begin position="1840"/>
        <end position="1859"/>
    </location>
</feature>
<feature type="repeat" description="2-20">
    <location>
        <begin position="1861"/>
        <end position="1880"/>
    </location>
</feature>
<feature type="repeat" description="2-21">
    <location>
        <begin position="1887"/>
        <end position="1906"/>
    </location>
</feature>
<feature type="repeat" description="YD 4">
    <location>
        <begin position="1898"/>
        <end position="1935"/>
    </location>
</feature>
<feature type="repeat" description="2-22">
    <location>
        <begin position="1908"/>
        <end position="1927"/>
    </location>
</feature>
<feature type="repeat" description="2-23">
    <location>
        <begin position="1929"/>
        <end position="1948"/>
    </location>
</feature>
<feature type="repeat" description="2-24; approximate">
    <location>
        <begin position="1969"/>
        <end position="1982"/>
    </location>
</feature>
<feature type="repeat" description="2-25">
    <location>
        <begin position="1983"/>
        <end position="2002"/>
    </location>
</feature>
<feature type="repeat" description="2-26">
    <location>
        <begin position="2008"/>
        <end position="2027"/>
    </location>
</feature>
<feature type="repeat" description="2-27">
    <location>
        <begin position="2028"/>
        <end position="2047"/>
    </location>
</feature>
<feature type="repeat" description="2-28">
    <location>
        <begin position="2051"/>
        <end position="2070"/>
    </location>
</feature>
<feature type="repeat" description="2-29">
    <location>
        <begin position="2071"/>
        <end position="2090"/>
    </location>
</feature>
<feature type="repeat" description="YD 5">
    <location>
        <begin position="2082"/>
        <end position="2113"/>
    </location>
</feature>
<feature type="repeat" description="2-30">
    <location>
        <begin position="2093"/>
        <end position="2112"/>
    </location>
</feature>
<feature type="repeat" description="2-31">
    <location>
        <begin position="2120"/>
        <end position="2139"/>
    </location>
</feature>
<feature type="region of interest" description="Disordered" evidence="2">
    <location>
        <begin position="36"/>
        <end position="59"/>
    </location>
</feature>
<feature type="region of interest" description="3 X 101 AA approximate tandem repeats">
    <location>
        <begin position="504"/>
        <end position="869"/>
    </location>
</feature>
<feature type="region of interest" description="31 X 21 AA approximate tandem repeats of X(4)-G-X(4)-[YF]-X-D-X(2)-G-X(4)">
    <location>
        <begin position="1021"/>
        <end position="2139"/>
    </location>
</feature>
<feature type="region of interest" description="Disordered" evidence="2">
    <location>
        <begin position="2312"/>
        <end position="2334"/>
    </location>
</feature>
<feature type="compositionally biased region" description="Basic residues" evidence="2">
    <location>
        <begin position="2315"/>
        <end position="2334"/>
    </location>
</feature>
<feature type="sequence conflict" description="In Ref. 1; AAA22883, 2; BAA06656 and 3; BAA06260." evidence="7" ref="1 2 3">
    <original>SG</original>
    <variation>RR</variation>
    <location>
        <begin position="1312"/>
        <end position="1313"/>
    </location>
</feature>
<proteinExistence type="evidence at protein level"/>
<dbReference type="EC" id="3.1.-.-"/>
<dbReference type="EMBL" id="L05634">
    <property type="protein sequence ID" value="AAA22883.1"/>
    <property type="molecule type" value="Genomic_DNA"/>
</dbReference>
<dbReference type="EMBL" id="D31856">
    <property type="protein sequence ID" value="BAA06656.1"/>
    <property type="molecule type" value="Genomic_DNA"/>
</dbReference>
<dbReference type="EMBL" id="D29985">
    <property type="protein sequence ID" value="BAA06260.1"/>
    <property type="molecule type" value="Genomic_DNA"/>
</dbReference>
<dbReference type="EMBL" id="D83026">
    <property type="protein sequence ID" value="BAA11683.1"/>
    <property type="molecule type" value="Genomic_DNA"/>
</dbReference>
<dbReference type="EMBL" id="AL009126">
    <property type="protein sequence ID" value="CAB15959.2"/>
    <property type="molecule type" value="Genomic_DNA"/>
</dbReference>
<dbReference type="PIR" id="S32920">
    <property type="entry name" value="S32920"/>
</dbReference>
<dbReference type="RefSeq" id="NP_391802.2">
    <property type="nucleotide sequence ID" value="NC_000964.3"/>
</dbReference>
<dbReference type="RefSeq" id="WP_003243665.1">
    <property type="nucleotide sequence ID" value="NZ_OZ025638.1"/>
</dbReference>
<dbReference type="SMR" id="Q07833"/>
<dbReference type="FunCoup" id="Q07833">
    <property type="interactions" value="14"/>
</dbReference>
<dbReference type="IntAct" id="Q07833">
    <property type="interactions" value="1"/>
</dbReference>
<dbReference type="STRING" id="224308.BSU39230"/>
<dbReference type="jPOST" id="Q07833"/>
<dbReference type="PaxDb" id="224308-BSU39230"/>
<dbReference type="EnsemblBacteria" id="CAB15959">
    <property type="protein sequence ID" value="CAB15959"/>
    <property type="gene ID" value="BSU_39230"/>
</dbReference>
<dbReference type="GeneID" id="937525"/>
<dbReference type="KEGG" id="bsu:BSU39230"/>
<dbReference type="PATRIC" id="fig|224308.179.peg.4247"/>
<dbReference type="eggNOG" id="COG3209">
    <property type="taxonomic scope" value="Bacteria"/>
</dbReference>
<dbReference type="InParanoid" id="Q07833"/>
<dbReference type="OrthoDB" id="1432909at2"/>
<dbReference type="BioCyc" id="BSUB:BSU39230-MONOMER"/>
<dbReference type="Proteomes" id="UP000001570">
    <property type="component" value="Chromosome"/>
</dbReference>
<dbReference type="GO" id="GO:0005576">
    <property type="term" value="C:extracellular region"/>
    <property type="evidence" value="ECO:0007669"/>
    <property type="project" value="UniProtKB-SubCell"/>
</dbReference>
<dbReference type="GO" id="GO:0004519">
    <property type="term" value="F:endonuclease activity"/>
    <property type="evidence" value="ECO:0007669"/>
    <property type="project" value="UniProtKB-KW"/>
</dbReference>
<dbReference type="GO" id="GO:0016798">
    <property type="term" value="F:hydrolase activity, acting on glycosyl bonds"/>
    <property type="evidence" value="ECO:0007669"/>
    <property type="project" value="InterPro"/>
</dbReference>
<dbReference type="GO" id="GO:0090729">
    <property type="term" value="F:toxin activity"/>
    <property type="evidence" value="ECO:0007669"/>
    <property type="project" value="UniProtKB-KW"/>
</dbReference>
<dbReference type="GO" id="GO:0004549">
    <property type="term" value="F:tRNA-specific ribonuclease activity"/>
    <property type="evidence" value="ECO:0000314"/>
    <property type="project" value="UniProtKB"/>
</dbReference>
<dbReference type="GO" id="GO:0016078">
    <property type="term" value="P:tRNA decay"/>
    <property type="evidence" value="ECO:0000314"/>
    <property type="project" value="UniProtKB"/>
</dbReference>
<dbReference type="FunFam" id="2.180.10.10:FF:000010">
    <property type="entry name" value="Cell wall-associated protein"/>
    <property type="match status" value="1"/>
</dbReference>
<dbReference type="FunFam" id="2.180.10.10:FF:000015">
    <property type="entry name" value="Cell wall-associated protein"/>
    <property type="match status" value="1"/>
</dbReference>
<dbReference type="Gene3D" id="2.60.120.970">
    <property type="match status" value="1"/>
</dbReference>
<dbReference type="Gene3D" id="2.60.120.260">
    <property type="entry name" value="Galactose-binding domain-like"/>
    <property type="match status" value="2"/>
</dbReference>
<dbReference type="Gene3D" id="2.60.40.10">
    <property type="entry name" value="Immunoglobulins"/>
    <property type="match status" value="1"/>
</dbReference>
<dbReference type="Gene3D" id="2.180.10.10">
    <property type="entry name" value="RHS repeat-associated core"/>
    <property type="match status" value="2"/>
</dbReference>
<dbReference type="InterPro" id="IPR055372">
    <property type="entry name" value="CBM96"/>
</dbReference>
<dbReference type="InterPro" id="IPR003305">
    <property type="entry name" value="CenC_carb-bd"/>
</dbReference>
<dbReference type="InterPro" id="IPR045351">
    <property type="entry name" value="DUF6531"/>
</dbReference>
<dbReference type="InterPro" id="IPR008979">
    <property type="entry name" value="Galactose-bd-like_sf"/>
</dbReference>
<dbReference type="InterPro" id="IPR013783">
    <property type="entry name" value="Ig-like_fold"/>
</dbReference>
<dbReference type="InterPro" id="IPR022385">
    <property type="entry name" value="Rhs_assc_core"/>
</dbReference>
<dbReference type="InterPro" id="IPR031325">
    <property type="entry name" value="RHS_repeat"/>
</dbReference>
<dbReference type="InterPro" id="IPR050708">
    <property type="entry name" value="T6SS_VgrG/RHS"/>
</dbReference>
<dbReference type="InterPro" id="IPR006530">
    <property type="entry name" value="YD"/>
</dbReference>
<dbReference type="NCBIfam" id="NF033679">
    <property type="entry name" value="DNRLRE_dom"/>
    <property type="match status" value="1"/>
</dbReference>
<dbReference type="NCBIfam" id="TIGR03696">
    <property type="entry name" value="Rhs_assc_core"/>
    <property type="match status" value="1"/>
</dbReference>
<dbReference type="NCBIfam" id="TIGR01643">
    <property type="entry name" value="YD_repeat_2x"/>
    <property type="match status" value="5"/>
</dbReference>
<dbReference type="PANTHER" id="PTHR32305">
    <property type="match status" value="1"/>
</dbReference>
<dbReference type="PANTHER" id="PTHR32305:SF15">
    <property type="entry name" value="PROTEIN RHSA-RELATED"/>
    <property type="match status" value="1"/>
</dbReference>
<dbReference type="Pfam" id="PF24517">
    <property type="entry name" value="CBM96"/>
    <property type="match status" value="1"/>
</dbReference>
<dbReference type="Pfam" id="PF02018">
    <property type="entry name" value="CBM_4_9"/>
    <property type="match status" value="1"/>
</dbReference>
<dbReference type="Pfam" id="PF20148">
    <property type="entry name" value="DUF6531"/>
    <property type="match status" value="1"/>
</dbReference>
<dbReference type="Pfam" id="PF05593">
    <property type="entry name" value="RHS_repeat"/>
    <property type="match status" value="7"/>
</dbReference>
<dbReference type="SUPFAM" id="SSF49785">
    <property type="entry name" value="Galactose-binding domain-like"/>
    <property type="match status" value="1"/>
</dbReference>
<protein>
    <recommendedName>
        <fullName>tRNA nuclease WapA</fullName>
        <ecNumber>3.1.-.-</ecNumber>
    </recommendedName>
    <alternativeName>
        <fullName>Cell wall-associated polypeptide CWBP200</fullName>
        <shortName>CWBP200</shortName>
    </alternativeName>
    <alternativeName>
        <fullName>RNase WapA</fullName>
    </alternativeName>
    <alternativeName>
        <fullName>Toxin WapA</fullName>
    </alternativeName>
    <alternativeName>
        <fullName>Wall-associated protein</fullName>
    </alternativeName>
</protein>
<reference key="1">
    <citation type="journal article" date="1993" name="Mol. Microbiol.">
        <title>Molecular analysis of three major wall-associated proteins of Bacillus subtilis 168: evidence for processing of the product of a gene encoding a 258 kDa precursor two-domain ligand-binding protein.</title>
        <authorList>
            <person name="Foster S.J."/>
        </authorList>
    </citation>
    <scope>NUCLEOTIDE SEQUENCE [GENOMIC DNA]</scope>
    <source>
        <strain>168</strain>
    </source>
</reference>
<reference key="2">
    <citation type="journal article" date="1995" name="Microbiology">
        <title>Cloning and sequencing of a 29 kb region of the Bacillus subtilis genome containing the hut and wapA loci.</title>
        <authorList>
            <person name="Yoshida K."/>
            <person name="Sano H."/>
            <person name="Seki S."/>
            <person name="Oda M."/>
            <person name="Fujimura M."/>
            <person name="Fujita Y."/>
        </authorList>
    </citation>
    <scope>NUCLEOTIDE SEQUENCE [GENOMIC DNA]</scope>
    <source>
        <strain>168 / BGSC1A1</strain>
    </source>
</reference>
<reference key="3">
    <citation type="journal article" date="1996" name="Microbiology">
        <title>Sequencing of a 65 kb region of the Bacillus subtilis genome containing the lic and cel loci, and creation of a 177 kb contig covering the gnt-sacXY region.</title>
        <authorList>
            <person name="Yoshida K."/>
            <person name="Shindo K."/>
            <person name="Sano H."/>
            <person name="Seki S."/>
            <person name="Fujimura M."/>
            <person name="Yanai N."/>
            <person name="Miwa Y."/>
            <person name="Fujita Y."/>
        </authorList>
    </citation>
    <scope>NUCLEOTIDE SEQUENCE [GENOMIC DNA]</scope>
    <source>
        <strain>168 / BGSC1A1</strain>
    </source>
</reference>
<reference key="4">
    <citation type="journal article" date="1997" name="Nature">
        <title>The complete genome sequence of the Gram-positive bacterium Bacillus subtilis.</title>
        <authorList>
            <person name="Kunst F."/>
            <person name="Ogasawara N."/>
            <person name="Moszer I."/>
            <person name="Albertini A.M."/>
            <person name="Alloni G."/>
            <person name="Azevedo V."/>
            <person name="Bertero M.G."/>
            <person name="Bessieres P."/>
            <person name="Bolotin A."/>
            <person name="Borchert S."/>
            <person name="Borriss R."/>
            <person name="Boursier L."/>
            <person name="Brans A."/>
            <person name="Braun M."/>
            <person name="Brignell S.C."/>
            <person name="Bron S."/>
            <person name="Brouillet S."/>
            <person name="Bruschi C.V."/>
            <person name="Caldwell B."/>
            <person name="Capuano V."/>
            <person name="Carter N.M."/>
            <person name="Choi S.-K."/>
            <person name="Codani J.-J."/>
            <person name="Connerton I.F."/>
            <person name="Cummings N.J."/>
            <person name="Daniel R.A."/>
            <person name="Denizot F."/>
            <person name="Devine K.M."/>
            <person name="Duesterhoeft A."/>
            <person name="Ehrlich S.D."/>
            <person name="Emmerson P.T."/>
            <person name="Entian K.-D."/>
            <person name="Errington J."/>
            <person name="Fabret C."/>
            <person name="Ferrari E."/>
            <person name="Foulger D."/>
            <person name="Fritz C."/>
            <person name="Fujita M."/>
            <person name="Fujita Y."/>
            <person name="Fuma S."/>
            <person name="Galizzi A."/>
            <person name="Galleron N."/>
            <person name="Ghim S.-Y."/>
            <person name="Glaser P."/>
            <person name="Goffeau A."/>
            <person name="Golightly E.J."/>
            <person name="Grandi G."/>
            <person name="Guiseppi G."/>
            <person name="Guy B.J."/>
            <person name="Haga K."/>
            <person name="Haiech J."/>
            <person name="Harwood C.R."/>
            <person name="Henaut A."/>
            <person name="Hilbert H."/>
            <person name="Holsappel S."/>
            <person name="Hosono S."/>
            <person name="Hullo M.-F."/>
            <person name="Itaya M."/>
            <person name="Jones L.-M."/>
            <person name="Joris B."/>
            <person name="Karamata D."/>
            <person name="Kasahara Y."/>
            <person name="Klaerr-Blanchard M."/>
            <person name="Klein C."/>
            <person name="Kobayashi Y."/>
            <person name="Koetter P."/>
            <person name="Koningstein G."/>
            <person name="Krogh S."/>
            <person name="Kumano M."/>
            <person name="Kurita K."/>
            <person name="Lapidus A."/>
            <person name="Lardinois S."/>
            <person name="Lauber J."/>
            <person name="Lazarevic V."/>
            <person name="Lee S.-M."/>
            <person name="Levine A."/>
            <person name="Liu H."/>
            <person name="Masuda S."/>
            <person name="Mauel C."/>
            <person name="Medigue C."/>
            <person name="Medina N."/>
            <person name="Mellado R.P."/>
            <person name="Mizuno M."/>
            <person name="Moestl D."/>
            <person name="Nakai S."/>
            <person name="Noback M."/>
            <person name="Noone D."/>
            <person name="O'Reilly M."/>
            <person name="Ogawa K."/>
            <person name="Ogiwara A."/>
            <person name="Oudega B."/>
            <person name="Park S.-H."/>
            <person name="Parro V."/>
            <person name="Pohl T.M."/>
            <person name="Portetelle D."/>
            <person name="Porwollik S."/>
            <person name="Prescott A.M."/>
            <person name="Presecan E."/>
            <person name="Pujic P."/>
            <person name="Purnelle B."/>
            <person name="Rapoport G."/>
            <person name="Rey M."/>
            <person name="Reynolds S."/>
            <person name="Rieger M."/>
            <person name="Rivolta C."/>
            <person name="Rocha E."/>
            <person name="Roche B."/>
            <person name="Rose M."/>
            <person name="Sadaie Y."/>
            <person name="Sato T."/>
            <person name="Scanlan E."/>
            <person name="Schleich S."/>
            <person name="Schroeter R."/>
            <person name="Scoffone F."/>
            <person name="Sekiguchi J."/>
            <person name="Sekowska A."/>
            <person name="Seror S.J."/>
            <person name="Serror P."/>
            <person name="Shin B.-S."/>
            <person name="Soldo B."/>
            <person name="Sorokin A."/>
            <person name="Tacconi E."/>
            <person name="Takagi T."/>
            <person name="Takahashi H."/>
            <person name="Takemaru K."/>
            <person name="Takeuchi M."/>
            <person name="Tamakoshi A."/>
            <person name="Tanaka T."/>
            <person name="Terpstra P."/>
            <person name="Tognoni A."/>
            <person name="Tosato V."/>
            <person name="Uchiyama S."/>
            <person name="Vandenbol M."/>
            <person name="Vannier F."/>
            <person name="Vassarotti A."/>
            <person name="Viari A."/>
            <person name="Wambutt R."/>
            <person name="Wedler E."/>
            <person name="Wedler H."/>
            <person name="Weitzenegger T."/>
            <person name="Winters P."/>
            <person name="Wipat A."/>
            <person name="Yamamoto H."/>
            <person name="Yamane K."/>
            <person name="Yasumoto K."/>
            <person name="Yata K."/>
            <person name="Yoshida K."/>
            <person name="Yoshikawa H.-F."/>
            <person name="Zumstein E."/>
            <person name="Yoshikawa H."/>
            <person name="Danchin A."/>
        </authorList>
    </citation>
    <scope>NUCLEOTIDE SEQUENCE [LARGE SCALE GENOMIC DNA]</scope>
    <source>
        <strain>168</strain>
    </source>
</reference>
<reference key="5">
    <citation type="journal article" date="2009" name="Microbiology">
        <title>From a consortium sequence to a unified sequence: the Bacillus subtilis 168 reference genome a decade later.</title>
        <authorList>
            <person name="Barbe V."/>
            <person name="Cruveiller S."/>
            <person name="Kunst F."/>
            <person name="Lenoble P."/>
            <person name="Meurice G."/>
            <person name="Sekowska A."/>
            <person name="Vallenet D."/>
            <person name="Wang T."/>
            <person name="Moszer I."/>
            <person name="Medigue C."/>
            <person name="Danchin A."/>
        </authorList>
    </citation>
    <scope>SEQUENCE REVISION TO 1312-1313</scope>
</reference>
<reference key="6">
    <citation type="journal article" date="2000" name="Microbiology">
        <title>Proteome analysis of Bacillus subtilis extracellular proteins: a two-dimensional protein electrophoretic study.</title>
        <authorList>
            <person name="Hirose I."/>
            <person name="Sano K."/>
            <person name="Shioda I."/>
            <person name="Kumano M."/>
            <person name="Nakamura K."/>
            <person name="Yamane K."/>
        </authorList>
    </citation>
    <scope>PROTEIN SEQUENCE OF 97-107</scope>
    <scope>SUBCELLULAR LOCATION</scope>
    <source>
        <strain>168</strain>
    </source>
</reference>
<reference key="7">
    <citation type="journal article" date="2002" name="Proteomics">
        <title>Stabilization of cell wall proteins in Bacillus subtilis: a proteomic approach.</title>
        <authorList>
            <person name="Antelmann H."/>
            <person name="Yamamoto H."/>
            <person name="Sekiguchi J."/>
            <person name="Hecker M."/>
        </authorList>
    </citation>
    <scope>ACTIVITY REGULATION</scope>
    <scope>SUBCELLULAR LOCATION</scope>
    <scope>IDENTIFICATION BY MASS SPECTROMETRY</scope>
    <source>
        <strain>168</strain>
    </source>
</reference>
<reference key="8">
    <citation type="journal article" date="2013" name="Proc. Natl. Acad. Sci. U.S.A.">
        <title>Rhs proteins from diverse bacteria mediate intercellular competition.</title>
        <authorList>
            <person name="Koskiniemi S."/>
            <person name="Lamoureux J.G."/>
            <person name="Nikolakakis K.C."/>
            <person name="t'Kint de Roodenbeke C."/>
            <person name="Kaplan M.D."/>
            <person name="Low D.A."/>
            <person name="Hayes C.S."/>
        </authorList>
    </citation>
    <scope>FUNCTION AS A TRNA NUCLEASE</scope>
    <scope>FUNCTION AS A TOXIN</scope>
    <scope>EXPRESSION IN E.COLI</scope>
    <scope>DISRUPTION PHENOTYPE</scope>
    <source>
        <strain>168</strain>
    </source>
</reference>
<reference key="9">
    <citation type="journal article" date="2021" name="PLoS Genet.">
        <title>Diverse LXG toxin and antitoxin systems specifically mediate intraspecies competition in Bacillus subtilis biofilms.</title>
        <authorList>
            <person name="Kobayashi K."/>
        </authorList>
    </citation>
    <scope>INDUCTION</scope>
    <scope>DISRUPTION PHENOTYPE</scope>
    <source>
        <strain>168 / Marburg / ATCC 6051 / DSM 10 / JCM 1465 / NBRC 13719 / NCIMB 3610 / NRRL NRS-744 / VKM B-501</strain>
    </source>
</reference>